<protein>
    <recommendedName>
        <fullName evidence="2">Pimeloyl-[acyl-carrier protein] methyl ester esterase</fullName>
        <ecNumber evidence="2">3.1.1.85</ecNumber>
    </recommendedName>
    <alternativeName>
        <fullName evidence="2">Biotin synthesis protein BioH</fullName>
    </alternativeName>
    <alternativeName>
        <fullName evidence="2">Carboxylesterase BioH</fullName>
    </alternativeName>
</protein>
<organism>
    <name type="scientific">Escherichia coli O157:H7</name>
    <dbReference type="NCBI Taxonomy" id="83334"/>
    <lineage>
        <taxon>Bacteria</taxon>
        <taxon>Pseudomonadati</taxon>
        <taxon>Pseudomonadota</taxon>
        <taxon>Gammaproteobacteria</taxon>
        <taxon>Enterobacterales</taxon>
        <taxon>Enterobacteriaceae</taxon>
        <taxon>Escherichia</taxon>
    </lineage>
</organism>
<dbReference type="EC" id="3.1.1.85" evidence="2"/>
<dbReference type="EMBL" id="AE005174">
    <property type="protein sequence ID" value="AAG58513.1"/>
    <property type="molecule type" value="Genomic_DNA"/>
</dbReference>
<dbReference type="EMBL" id="BA000007">
    <property type="protein sequence ID" value="BAB37678.2"/>
    <property type="molecule type" value="Genomic_DNA"/>
</dbReference>
<dbReference type="PIR" id="E86006">
    <property type="entry name" value="E86006"/>
</dbReference>
<dbReference type="PIR" id="F91160">
    <property type="entry name" value="F91160"/>
</dbReference>
<dbReference type="RefSeq" id="NP_312282.2">
    <property type="nucleotide sequence ID" value="NC_002695.1"/>
</dbReference>
<dbReference type="RefSeq" id="WP_001060090.1">
    <property type="nucleotide sequence ID" value="NZ_VOAI01000004.1"/>
</dbReference>
<dbReference type="SMR" id="Q8X716"/>
<dbReference type="STRING" id="155864.Z4767"/>
<dbReference type="ESTHER" id="ecoli-bioh">
    <property type="family name" value="BioH"/>
</dbReference>
<dbReference type="MEROPS" id="S33.994"/>
<dbReference type="GeneID" id="915887"/>
<dbReference type="KEGG" id="ece:Z4767"/>
<dbReference type="KEGG" id="ecs:ECs_4254"/>
<dbReference type="PATRIC" id="fig|386585.9.peg.4443"/>
<dbReference type="eggNOG" id="COG0596">
    <property type="taxonomic scope" value="Bacteria"/>
</dbReference>
<dbReference type="HOGENOM" id="CLU_020336_12_2_6"/>
<dbReference type="OMA" id="PFISHPQ"/>
<dbReference type="UniPathway" id="UPA00078"/>
<dbReference type="Proteomes" id="UP000000558">
    <property type="component" value="Chromosome"/>
</dbReference>
<dbReference type="Proteomes" id="UP000002519">
    <property type="component" value="Chromosome"/>
</dbReference>
<dbReference type="GO" id="GO:0005737">
    <property type="term" value="C:cytoplasm"/>
    <property type="evidence" value="ECO:0007669"/>
    <property type="project" value="UniProtKB-SubCell"/>
</dbReference>
<dbReference type="GO" id="GO:0090499">
    <property type="term" value="F:pimelyl-[acyl-carrier protein] methyl ester esterase activity"/>
    <property type="evidence" value="ECO:0007669"/>
    <property type="project" value="UniProtKB-EC"/>
</dbReference>
<dbReference type="GO" id="GO:0009102">
    <property type="term" value="P:biotin biosynthetic process"/>
    <property type="evidence" value="ECO:0007669"/>
    <property type="project" value="UniProtKB-UniRule"/>
</dbReference>
<dbReference type="FunFam" id="3.40.50.1820:FF:000045">
    <property type="entry name" value="Pimeloyl-[acyl-carrier protein] methyl ester esterase"/>
    <property type="match status" value="1"/>
</dbReference>
<dbReference type="Gene3D" id="3.40.50.1820">
    <property type="entry name" value="alpha/beta hydrolase"/>
    <property type="match status" value="1"/>
</dbReference>
<dbReference type="HAMAP" id="MF_01260">
    <property type="entry name" value="Carboxylester"/>
    <property type="match status" value="1"/>
</dbReference>
<dbReference type="InterPro" id="IPR000073">
    <property type="entry name" value="AB_hydrolase_1"/>
</dbReference>
<dbReference type="InterPro" id="IPR029058">
    <property type="entry name" value="AB_hydrolase_fold"/>
</dbReference>
<dbReference type="InterPro" id="IPR010076">
    <property type="entry name" value="BioH"/>
</dbReference>
<dbReference type="InterPro" id="IPR050228">
    <property type="entry name" value="Carboxylesterase_BioH"/>
</dbReference>
<dbReference type="NCBIfam" id="TIGR01738">
    <property type="entry name" value="bioH"/>
    <property type="match status" value="1"/>
</dbReference>
<dbReference type="NCBIfam" id="NF007674">
    <property type="entry name" value="PRK10349.1"/>
    <property type="match status" value="1"/>
</dbReference>
<dbReference type="PANTHER" id="PTHR43194">
    <property type="entry name" value="HYDROLASE ALPHA/BETA FOLD FAMILY"/>
    <property type="match status" value="1"/>
</dbReference>
<dbReference type="PANTHER" id="PTHR43194:SF5">
    <property type="entry name" value="PIMELOYL-[ACYL-CARRIER PROTEIN] METHYL ESTER ESTERASE"/>
    <property type="match status" value="1"/>
</dbReference>
<dbReference type="Pfam" id="PF00561">
    <property type="entry name" value="Abhydrolase_1"/>
    <property type="match status" value="1"/>
</dbReference>
<dbReference type="SUPFAM" id="SSF53474">
    <property type="entry name" value="alpha/beta-Hydrolases"/>
    <property type="match status" value="1"/>
</dbReference>
<evidence type="ECO:0000255" key="1"/>
<evidence type="ECO:0000255" key="2">
    <source>
        <dbReference type="HAMAP-Rule" id="MF_01260"/>
    </source>
</evidence>
<keyword id="KW-0093">Biotin biosynthesis</keyword>
<keyword id="KW-0963">Cytoplasm</keyword>
<keyword id="KW-0378">Hydrolase</keyword>
<keyword id="KW-1185">Reference proteome</keyword>
<keyword id="KW-0719">Serine esterase</keyword>
<accession>Q8X716</accession>
<accession>Q7AAB2</accession>
<proteinExistence type="inferred from homology"/>
<reference key="1">
    <citation type="journal article" date="2001" name="Nature">
        <title>Genome sequence of enterohaemorrhagic Escherichia coli O157:H7.</title>
        <authorList>
            <person name="Perna N.T."/>
            <person name="Plunkett G. III"/>
            <person name="Burland V."/>
            <person name="Mau B."/>
            <person name="Glasner J.D."/>
            <person name="Rose D.J."/>
            <person name="Mayhew G.F."/>
            <person name="Evans P.S."/>
            <person name="Gregor J."/>
            <person name="Kirkpatrick H.A."/>
            <person name="Posfai G."/>
            <person name="Hackett J."/>
            <person name="Klink S."/>
            <person name="Boutin A."/>
            <person name="Shao Y."/>
            <person name="Miller L."/>
            <person name="Grotbeck E.J."/>
            <person name="Davis N.W."/>
            <person name="Lim A."/>
            <person name="Dimalanta E.T."/>
            <person name="Potamousis K."/>
            <person name="Apodaca J."/>
            <person name="Anantharaman T.S."/>
            <person name="Lin J."/>
            <person name="Yen G."/>
            <person name="Schwartz D.C."/>
            <person name="Welch R.A."/>
            <person name="Blattner F.R."/>
        </authorList>
    </citation>
    <scope>NUCLEOTIDE SEQUENCE [LARGE SCALE GENOMIC DNA]</scope>
    <source>
        <strain>O157:H7 / EDL933 / ATCC 700927 / EHEC</strain>
    </source>
</reference>
<reference key="2">
    <citation type="journal article" date="2001" name="DNA Res.">
        <title>Complete genome sequence of enterohemorrhagic Escherichia coli O157:H7 and genomic comparison with a laboratory strain K-12.</title>
        <authorList>
            <person name="Hayashi T."/>
            <person name="Makino K."/>
            <person name="Ohnishi M."/>
            <person name="Kurokawa K."/>
            <person name="Ishii K."/>
            <person name="Yokoyama K."/>
            <person name="Han C.-G."/>
            <person name="Ohtsubo E."/>
            <person name="Nakayama K."/>
            <person name="Murata T."/>
            <person name="Tanaka M."/>
            <person name="Tobe T."/>
            <person name="Iida T."/>
            <person name="Takami H."/>
            <person name="Honda T."/>
            <person name="Sasakawa C."/>
            <person name="Ogasawara N."/>
            <person name="Yasunaga T."/>
            <person name="Kuhara S."/>
            <person name="Shiba T."/>
            <person name="Hattori M."/>
            <person name="Shinagawa H."/>
        </authorList>
    </citation>
    <scope>NUCLEOTIDE SEQUENCE [LARGE SCALE GENOMIC DNA]</scope>
    <source>
        <strain>O157:H7 / Sakai / RIMD 0509952 / EHEC</strain>
    </source>
</reference>
<sequence length="256" mass="28609">MNNIWWQTKGQGNVHLVLLHGWGLNAEVWRCIDEELSSHFTLHLVDLPGFGRSRGFGALSLAEMAEAVLRQAPDKAIWLGWSLGGLVASQIALTHPERVQALVTVASSPCFSARDEWPGIKPDVLAGFQQQLSDDFQRTVERFLALQTMGTETARQDARALKKTVLALPMPEVDVLNGGLEILKTVDLRLPLQNVPMPFLRLYGYLDGLVPRKVVPMLDKLWPHSESYIFAKAAHAPFISHPVEFRHVLVALKQRV</sequence>
<comment type="function">
    <text evidence="2">The physiological role of BioH is to remove the methyl group introduced by BioC when the pimeloyl moiety is complete. It allows to synthesize pimeloyl-ACP via the fatty acid synthetic pathway through the hydrolysis of the ester bonds of pimeloyl-ACP esters.</text>
</comment>
<comment type="catalytic activity">
    <reaction evidence="2">
        <text>6-carboxyhexanoyl-[ACP] methyl ester + H2O = 6-carboxyhexanoyl-[ACP] + methanol + H(+)</text>
        <dbReference type="Rhea" id="RHEA:42700"/>
        <dbReference type="Rhea" id="RHEA-COMP:9955"/>
        <dbReference type="Rhea" id="RHEA-COMP:10186"/>
        <dbReference type="ChEBI" id="CHEBI:15377"/>
        <dbReference type="ChEBI" id="CHEBI:15378"/>
        <dbReference type="ChEBI" id="CHEBI:17790"/>
        <dbReference type="ChEBI" id="CHEBI:78846"/>
        <dbReference type="ChEBI" id="CHEBI:82735"/>
        <dbReference type="EC" id="3.1.1.85"/>
    </reaction>
</comment>
<comment type="pathway">
    <text evidence="2">Cofactor biosynthesis; biotin biosynthesis.</text>
</comment>
<comment type="subunit">
    <text evidence="2">Monomer.</text>
</comment>
<comment type="subcellular location">
    <subcellularLocation>
        <location evidence="2">Cytoplasm</location>
    </subcellularLocation>
</comment>
<comment type="similarity">
    <text evidence="2">Belongs to the AB hydrolase superfamily. Carboxylesterase BioH family.</text>
</comment>
<name>BIOH_ECO57</name>
<gene>
    <name evidence="2" type="primary">bioH</name>
    <name type="ordered locus">Z4767</name>
    <name type="ordered locus">ECs4254</name>
</gene>
<feature type="chain" id="PRO_0000204475" description="Pimeloyl-[acyl-carrier protein] methyl ester esterase">
    <location>
        <begin position="1"/>
        <end position="256"/>
    </location>
</feature>
<feature type="domain" description="AB hydrolase-1" evidence="1">
    <location>
        <begin position="15"/>
        <end position="242"/>
    </location>
</feature>
<feature type="active site" description="Nucleophile" evidence="2">
    <location>
        <position position="82"/>
    </location>
</feature>
<feature type="active site" evidence="2">
    <location>
        <position position="207"/>
    </location>
</feature>
<feature type="active site" evidence="2">
    <location>
        <position position="235"/>
    </location>
</feature>
<feature type="binding site" evidence="2">
    <location>
        <position position="22"/>
    </location>
    <ligand>
        <name>substrate</name>
    </ligand>
</feature>
<feature type="binding site" evidence="2">
    <location>
        <begin position="82"/>
        <end position="83"/>
    </location>
    <ligand>
        <name>substrate</name>
    </ligand>
</feature>
<feature type="binding site" evidence="2">
    <location>
        <begin position="143"/>
        <end position="147"/>
    </location>
    <ligand>
        <name>substrate</name>
    </ligand>
</feature>
<feature type="binding site" evidence="2">
    <location>
        <position position="235"/>
    </location>
    <ligand>
        <name>substrate</name>
    </ligand>
</feature>